<reference key="1">
    <citation type="journal article" date="2003" name="J. Biol. Chem.">
        <title>The structural evolution of a P2Y-like G-protein-coupled receptor.</title>
        <authorList>
            <person name="Schulz A."/>
            <person name="Schoneberg T."/>
        </authorList>
    </citation>
    <scope>NUCLEOTIDE SEQUENCE [GENOMIC DNA]</scope>
</reference>
<protein>
    <recommendedName>
        <fullName>Probable G-protein coupled receptor 34</fullName>
    </recommendedName>
</protein>
<evidence type="ECO:0000250" key="1">
    <source>
        <dbReference type="UniProtKB" id="Q9R1K6"/>
    </source>
</evidence>
<evidence type="ECO:0000250" key="2">
    <source>
        <dbReference type="UniProtKB" id="Q9UPC5"/>
    </source>
</evidence>
<evidence type="ECO:0000255" key="3"/>
<evidence type="ECO:0000255" key="4">
    <source>
        <dbReference type="PROSITE-ProRule" id="PRU00521"/>
    </source>
</evidence>
<keyword id="KW-1003">Cell membrane</keyword>
<keyword id="KW-1015">Disulfide bond</keyword>
<keyword id="KW-0297">G-protein coupled receptor</keyword>
<keyword id="KW-0325">Glycoprotein</keyword>
<keyword id="KW-0472">Membrane</keyword>
<keyword id="KW-0675">Receptor</keyword>
<keyword id="KW-1185">Reference proteome</keyword>
<keyword id="KW-0807">Transducer</keyword>
<keyword id="KW-0812">Transmembrane</keyword>
<keyword id="KW-1133">Transmembrane helix</keyword>
<gene>
    <name type="primary">GPR34</name>
</gene>
<feature type="chain" id="PRO_0000069562" description="Probable G-protein coupled receptor 34">
    <location>
        <begin position="1"/>
        <end position="381"/>
    </location>
</feature>
<feature type="topological domain" description="Extracellular" evidence="3">
    <location>
        <begin position="1"/>
        <end position="61"/>
    </location>
</feature>
<feature type="transmembrane region" description="Helical; Name=1" evidence="3">
    <location>
        <begin position="62"/>
        <end position="82"/>
    </location>
</feature>
<feature type="topological domain" description="Cytoplasmic" evidence="3">
    <location>
        <begin position="83"/>
        <end position="88"/>
    </location>
</feature>
<feature type="transmembrane region" description="Helical; Name=2" evidence="3">
    <location>
        <begin position="89"/>
        <end position="109"/>
    </location>
</feature>
<feature type="topological domain" description="Extracellular" evidence="3">
    <location>
        <begin position="110"/>
        <end position="128"/>
    </location>
</feature>
<feature type="transmembrane region" description="Helical; Name=3" evidence="3">
    <location>
        <begin position="129"/>
        <end position="149"/>
    </location>
</feature>
<feature type="topological domain" description="Cytoplasmic" evidence="3">
    <location>
        <begin position="150"/>
        <end position="171"/>
    </location>
</feature>
<feature type="transmembrane region" description="Helical; Name=4" evidence="3">
    <location>
        <begin position="172"/>
        <end position="192"/>
    </location>
</feature>
<feature type="topological domain" description="Extracellular" evidence="3">
    <location>
        <begin position="193"/>
        <end position="216"/>
    </location>
</feature>
<feature type="transmembrane region" description="Helical; Name=5" evidence="3">
    <location>
        <begin position="217"/>
        <end position="237"/>
    </location>
</feature>
<feature type="topological domain" description="Cytoplasmic" evidence="3">
    <location>
        <begin position="238"/>
        <end position="269"/>
    </location>
</feature>
<feature type="transmembrane region" description="Helical; Name=6" evidence="3">
    <location>
        <begin position="270"/>
        <end position="290"/>
    </location>
</feature>
<feature type="topological domain" description="Extracellular" evidence="3">
    <location>
        <begin position="291"/>
        <end position="310"/>
    </location>
</feature>
<feature type="transmembrane region" description="Helical; Name=7" evidence="3">
    <location>
        <begin position="311"/>
        <end position="331"/>
    </location>
</feature>
<feature type="topological domain" description="Cytoplasmic" evidence="3">
    <location>
        <begin position="332"/>
        <end position="381"/>
    </location>
</feature>
<feature type="glycosylation site" description="N-linked (GlcNAc...) asparagine" evidence="3">
    <location>
        <position position="28"/>
    </location>
</feature>
<feature type="glycosylation site" description="N-linked (GlcNAc...) asparagine" evidence="3">
    <location>
        <position position="36"/>
    </location>
</feature>
<feature type="glycosylation site" description="N-linked (GlcNAc...) asparagine" evidence="3">
    <location>
        <position position="42"/>
    </location>
</feature>
<feature type="glycosylation site" description="N-linked (GlcNAc...) asparagine" evidence="3">
    <location>
        <position position="200"/>
    </location>
</feature>
<feature type="glycosylation site" description="N-linked (GlcNAc...) asparagine" evidence="3">
    <location>
        <position position="295"/>
    </location>
</feature>
<feature type="disulfide bond" evidence="4">
    <location>
        <begin position="127"/>
        <end position="204"/>
    </location>
</feature>
<dbReference type="EMBL" id="AY241084">
    <property type="protein sequence ID" value="AAP04293.1"/>
    <property type="molecule type" value="Genomic_DNA"/>
</dbReference>
<dbReference type="RefSeq" id="NP_001009135.1">
    <property type="nucleotide sequence ID" value="NM_001009135.4"/>
</dbReference>
<dbReference type="RefSeq" id="XP_009437233.1">
    <property type="nucleotide sequence ID" value="XM_009438958.5"/>
</dbReference>
<dbReference type="RefSeq" id="XP_009437234.1">
    <property type="nucleotide sequence ID" value="XM_009438959.5"/>
</dbReference>
<dbReference type="RefSeq" id="XP_009437235.1">
    <property type="nucleotide sequence ID" value="XM_009438960.2"/>
</dbReference>
<dbReference type="RefSeq" id="XP_009437236.1">
    <property type="nucleotide sequence ID" value="XM_009438961.2"/>
</dbReference>
<dbReference type="RefSeq" id="XP_016798134.1">
    <property type="nucleotide sequence ID" value="XM_016942645.1"/>
</dbReference>
<dbReference type="RefSeq" id="XP_063659860.1">
    <property type="nucleotide sequence ID" value="XM_063803790.1"/>
</dbReference>
<dbReference type="RefSeq" id="XP_063659862.1">
    <property type="nucleotide sequence ID" value="XM_063803792.1"/>
</dbReference>
<dbReference type="RefSeq" id="XP_063659863.1">
    <property type="nucleotide sequence ID" value="XM_063803793.1"/>
</dbReference>
<dbReference type="RefSeq" id="XP_063659864.1">
    <property type="nucleotide sequence ID" value="XM_063803794.1"/>
</dbReference>
<dbReference type="RefSeq" id="XP_063659865.1">
    <property type="nucleotide sequence ID" value="XM_063803795.1"/>
</dbReference>
<dbReference type="SMR" id="P60019"/>
<dbReference type="FunCoup" id="P60019">
    <property type="interactions" value="278"/>
</dbReference>
<dbReference type="GlyCosmos" id="P60019">
    <property type="glycosylation" value="5 sites, No reported glycans"/>
</dbReference>
<dbReference type="PaxDb" id="9598-ENSPTRP00000037437"/>
<dbReference type="GeneID" id="473572"/>
<dbReference type="CTD" id="2857"/>
<dbReference type="eggNOG" id="ENOG502QT81">
    <property type="taxonomic scope" value="Eukaryota"/>
</dbReference>
<dbReference type="HOGENOM" id="CLU_009579_8_2_1"/>
<dbReference type="InParanoid" id="P60019"/>
<dbReference type="TreeFam" id="TF330969"/>
<dbReference type="Proteomes" id="UP000002277">
    <property type="component" value="Unplaced"/>
</dbReference>
<dbReference type="GO" id="GO:0005886">
    <property type="term" value="C:plasma membrane"/>
    <property type="evidence" value="ECO:0007669"/>
    <property type="project" value="UniProtKB-SubCell"/>
</dbReference>
<dbReference type="GO" id="GO:0045028">
    <property type="term" value="F:G protein-coupled purinergic nucleotide receptor activity"/>
    <property type="evidence" value="ECO:0000318"/>
    <property type="project" value="GO_Central"/>
</dbReference>
<dbReference type="GO" id="GO:0007186">
    <property type="term" value="P:G protein-coupled receptor signaling pathway"/>
    <property type="evidence" value="ECO:0000318"/>
    <property type="project" value="GO_Central"/>
</dbReference>
<dbReference type="CDD" id="cd15148">
    <property type="entry name" value="7tmA_GPR34-like"/>
    <property type="match status" value="1"/>
</dbReference>
<dbReference type="FunFam" id="1.20.1070.10:FF:000150">
    <property type="entry name" value="probable G-protein coupled receptor 34"/>
    <property type="match status" value="1"/>
</dbReference>
<dbReference type="Gene3D" id="1.20.1070.10">
    <property type="entry name" value="Rhodopsin 7-helix transmembrane proteins"/>
    <property type="match status" value="1"/>
</dbReference>
<dbReference type="InterPro" id="IPR000276">
    <property type="entry name" value="GPCR_Rhodpsn"/>
</dbReference>
<dbReference type="InterPro" id="IPR017452">
    <property type="entry name" value="GPCR_Rhodpsn_7TM"/>
</dbReference>
<dbReference type="InterPro" id="IPR048057">
    <property type="entry name" value="GPR34_7tmA"/>
</dbReference>
<dbReference type="PANTHER" id="PTHR24233:SF1">
    <property type="entry name" value="G-PROTEIN COUPLED RECEPTOR 34-RELATED"/>
    <property type="match status" value="1"/>
</dbReference>
<dbReference type="PANTHER" id="PTHR24233">
    <property type="entry name" value="P2Y PURINOCEPTOR-RELATED G-PROTEIN COUPLED RECEPTOR"/>
    <property type="match status" value="1"/>
</dbReference>
<dbReference type="Pfam" id="PF00001">
    <property type="entry name" value="7tm_1"/>
    <property type="match status" value="1"/>
</dbReference>
<dbReference type="PRINTS" id="PR00237">
    <property type="entry name" value="GPCRRHODOPSN"/>
</dbReference>
<dbReference type="PRINTS" id="PR01157">
    <property type="entry name" value="P2YPURNOCPTR"/>
</dbReference>
<dbReference type="SUPFAM" id="SSF81321">
    <property type="entry name" value="Family A G protein-coupled receptor-like"/>
    <property type="match status" value="1"/>
</dbReference>
<dbReference type="PROSITE" id="PS00237">
    <property type="entry name" value="G_PROTEIN_RECEP_F1_1"/>
    <property type="match status" value="1"/>
</dbReference>
<dbReference type="PROSITE" id="PS50262">
    <property type="entry name" value="G_PROTEIN_RECEP_F1_2"/>
    <property type="match status" value="1"/>
</dbReference>
<accession>P60019</accession>
<organism>
    <name type="scientific">Pan troglodytes</name>
    <name type="common">Chimpanzee</name>
    <dbReference type="NCBI Taxonomy" id="9598"/>
    <lineage>
        <taxon>Eukaryota</taxon>
        <taxon>Metazoa</taxon>
        <taxon>Chordata</taxon>
        <taxon>Craniata</taxon>
        <taxon>Vertebrata</taxon>
        <taxon>Euteleostomi</taxon>
        <taxon>Mammalia</taxon>
        <taxon>Eutheria</taxon>
        <taxon>Euarchontoglires</taxon>
        <taxon>Primates</taxon>
        <taxon>Haplorrhini</taxon>
        <taxon>Catarrhini</taxon>
        <taxon>Hominidae</taxon>
        <taxon>Pan</taxon>
    </lineage>
</organism>
<comment type="function">
    <text evidence="1 2">G-protein-coupled receptor of lysophosphatidylserine (LysoPS) that plays different roles in immune response (By similarity). Acts a damage-sensing receptor that triggers tissue repair upon recognition of dying neutrophils (By similarity). Mechanistically, apoptotic neutrophils release lysophosphatydilserine that are recognized by type 3 innate lymphoid cells (ILC3s) via GPR34, which activates downstream PI3K-AKT and RAS-ERK signaling pathways leading to STAT3 activation and IL-22 production (By similarity). Plays an important role in microglial function, controlling morphology and phagocytosis (By similarity).</text>
</comment>
<comment type="subcellular location">
    <subcellularLocation>
        <location evidence="2">Cell membrane</location>
        <topology evidence="2">Multi-pass membrane protein</topology>
    </subcellularLocation>
</comment>
<comment type="similarity">
    <text evidence="4">Belongs to the G-protein coupled receptor 1 family.</text>
</comment>
<name>GPR34_PANTR</name>
<sequence length="381" mass="43860">MRSHTITMTTTSVSSWPYSSHRMRFITNHSDQPPQNFSATPNVTTCPMDEKLLSTVLTTSYSVIFIVGLVGNIIALYVFLGIHRKRNSIQIYLLNVAIADLLLIFCLPFRIMYHINQNKWTLGVILCKVVGTLFYMNMYISIILLGFISLDRYIKINRSIQQRKAITTKQSIYVCCIVWMLALGGFLTMIILTLKKGGHNSTMCFHYRDKHNAKGEAIFNFILVVMFWLIFLLIILSYIKIGKNLLRISKRRSKFPNSGKYATTARNSFIVLIIFTICFVPYHAFRFIYISSQLNVSSCYWKEIVHKTNEIMLVLSSFNSCLDPVMYFLMSSNIRKIMCQLLFRRFQGEPSRSESTSEFKPGYSLHDTSVAVKIQSSSKST</sequence>
<proteinExistence type="inferred from homology"/>